<comment type="function">
    <text evidence="1">Loosely associated component of the core of photosystem II (PSII), it is not always seen in crystals. PSII is a light-driven water plastoquinone oxidoreductase, using light energy to abstract electrons from H(2)O, generating a proton gradient subsequently used for ATP formation.</text>
</comment>
<comment type="subunit">
    <text evidence="1">PSII is composed of 1 copy each of membrane proteins PsbA, PsbB, PsbC, PsbD, PsbE, PsbF, PsbH, PsbI, PsbJ, PsbK, PsbL, PsbM, PsbT, PsbX, PsbY, PsbZ, Psb30/Ycf12, peripheral proteins PsbO, CyanoQ (PsbQ), PsbU, PsbV and a large number of cofactors. It forms dimeric complexes.</text>
</comment>
<comment type="subcellular location">
    <subcellularLocation>
        <location evidence="1">Cellular thylakoid membrane</location>
        <topology evidence="1">Single-pass membrane protein</topology>
    </subcellularLocation>
</comment>
<comment type="similarity">
    <text evidence="1">Belongs to the PsbY family.</text>
</comment>
<evidence type="ECO:0000255" key="1">
    <source>
        <dbReference type="HAMAP-Rule" id="MF_00717"/>
    </source>
</evidence>
<gene>
    <name evidence="1" type="primary">psbY</name>
    <name type="ordered locus">SYNW0898</name>
</gene>
<proteinExistence type="inferred from homology"/>
<protein>
    <recommendedName>
        <fullName evidence="1">Photosystem II reaction center protein Y</fullName>
    </recommendedName>
</protein>
<name>PSBY_PARMW</name>
<keyword id="KW-0472">Membrane</keyword>
<keyword id="KW-0602">Photosynthesis</keyword>
<keyword id="KW-0604">Photosystem II</keyword>
<keyword id="KW-0793">Thylakoid</keyword>
<keyword id="KW-0812">Transmembrane</keyword>
<keyword id="KW-1133">Transmembrane helix</keyword>
<dbReference type="EMBL" id="BX569691">
    <property type="protein sequence ID" value="CAE07413.1"/>
    <property type="molecule type" value="Genomic_DNA"/>
</dbReference>
<dbReference type="SMR" id="P59908"/>
<dbReference type="STRING" id="84588.SYNW0898"/>
<dbReference type="KEGG" id="syw:SYNW0898"/>
<dbReference type="eggNOG" id="ENOG502ZJ2H">
    <property type="taxonomic scope" value="Bacteria"/>
</dbReference>
<dbReference type="HOGENOM" id="CLU_218393_1_0_3"/>
<dbReference type="BioCyc" id="MetaCyc:TX72_RS04455-MONOMER"/>
<dbReference type="Proteomes" id="UP000001422">
    <property type="component" value="Chromosome"/>
</dbReference>
<dbReference type="GO" id="GO:0009523">
    <property type="term" value="C:photosystem II"/>
    <property type="evidence" value="ECO:0007669"/>
    <property type="project" value="UniProtKB-KW"/>
</dbReference>
<dbReference type="GO" id="GO:0031676">
    <property type="term" value="C:plasma membrane-derived thylakoid membrane"/>
    <property type="evidence" value="ECO:0007669"/>
    <property type="project" value="UniProtKB-SubCell"/>
</dbReference>
<dbReference type="GO" id="GO:0030145">
    <property type="term" value="F:manganese ion binding"/>
    <property type="evidence" value="ECO:0007669"/>
    <property type="project" value="InterPro"/>
</dbReference>
<dbReference type="GO" id="GO:0015979">
    <property type="term" value="P:photosynthesis"/>
    <property type="evidence" value="ECO:0007669"/>
    <property type="project" value="UniProtKB-UniRule"/>
</dbReference>
<dbReference type="HAMAP" id="MF_00717">
    <property type="entry name" value="PSII_PsbY"/>
    <property type="match status" value="1"/>
</dbReference>
<dbReference type="InterPro" id="IPR009388">
    <property type="entry name" value="PSII_PsbY"/>
</dbReference>
<dbReference type="NCBIfam" id="NF009711">
    <property type="entry name" value="PRK13240.1"/>
    <property type="match status" value="1"/>
</dbReference>
<dbReference type="Pfam" id="PF06298">
    <property type="entry name" value="PsbY"/>
    <property type="match status" value="1"/>
</dbReference>
<feature type="chain" id="PRO_0000216896" description="Photosystem II reaction center protein Y">
    <location>
        <begin position="1"/>
        <end position="43"/>
    </location>
</feature>
<feature type="transmembrane region" description="Helical" evidence="1">
    <location>
        <begin position="8"/>
        <end position="26"/>
    </location>
</feature>
<sequence length="43" mass="4592">MLGIDARLFLVVAPILAAVSWAAFNIGRAAVGQLQLLIKRSRA</sequence>
<accession>P59908</accession>
<organism>
    <name type="scientific">Parasynechococcus marenigrum (strain WH8102)</name>
    <dbReference type="NCBI Taxonomy" id="84588"/>
    <lineage>
        <taxon>Bacteria</taxon>
        <taxon>Bacillati</taxon>
        <taxon>Cyanobacteriota</taxon>
        <taxon>Cyanophyceae</taxon>
        <taxon>Synechococcales</taxon>
        <taxon>Prochlorococcaceae</taxon>
        <taxon>Parasynechococcus</taxon>
        <taxon>Parasynechococcus marenigrum</taxon>
    </lineage>
</organism>
<reference key="1">
    <citation type="journal article" date="2003" name="Nature">
        <title>The genome of a motile marine Synechococcus.</title>
        <authorList>
            <person name="Palenik B."/>
            <person name="Brahamsha B."/>
            <person name="Larimer F.W."/>
            <person name="Land M.L."/>
            <person name="Hauser L."/>
            <person name="Chain P."/>
            <person name="Lamerdin J.E."/>
            <person name="Regala W."/>
            <person name="Allen E.E."/>
            <person name="McCarren J."/>
            <person name="Paulsen I.T."/>
            <person name="Dufresne A."/>
            <person name="Partensky F."/>
            <person name="Webb E.A."/>
            <person name="Waterbury J."/>
        </authorList>
    </citation>
    <scope>NUCLEOTIDE SEQUENCE [LARGE SCALE GENOMIC DNA]</scope>
    <source>
        <strain>WH8102</strain>
    </source>
</reference>